<name>RUSF1_HUMAN</name>
<gene>
    <name evidence="6" type="primary">RUSF1</name>
    <name type="synonym">C16orf58</name>
</gene>
<keyword id="KW-0007">Acetylation</keyword>
<keyword id="KW-0025">Alternative splicing</keyword>
<keyword id="KW-0472">Membrane</keyword>
<keyword id="KW-0597">Phosphoprotein</keyword>
<keyword id="KW-1267">Proteomics identification</keyword>
<keyword id="KW-1185">Reference proteome</keyword>
<keyword id="KW-0812">Transmembrane</keyword>
<keyword id="KW-1133">Transmembrane helix</keyword>
<sequence>MADDAGLETPLCSEQFGSGEARGCRAAADGSLQWEVGGWRWWGLSRAFTVKPEGRDAGEVGASGAPSPPLSGLQAVFLPQGFPDSVSPDYLPYQLWDSVQAFASSLSGSLATQAVLLGIGVGNAKATVSAATATWLVKDSTGMLGRIVFAWWKGSKLDCNAKQWRLFADILNDVAMFLEIMAPVYPICFTMTVSTSNLAKCIVSVAGGATRAALTVHQARRNNMADVSAKDSSQETLVNLAGLLVSLLMLPLVSGCPGFSLGCFFFLTALHIYANYRAVRALVMETLNEGRLRLVLKHYLQRGEVLDPTAANRMEPLWTGFWPAPSLSLGVPLHRLVSSVFELQQLVEGHQESYLLCWDQSQNQVQVVLNQKAGPKTILRAATHGLMLGALQGDGPLPAELEELRNRVRAGPKKESWVVVKETHEVLDMLFPKFLKGLQDAGWKTEKHQLEVDEWRATWLLSPEKKVL</sequence>
<accession>Q96GQ5</accession>
<accession>Q53GL8</accession>
<accession>Q8NAJ4</accession>
<accession>Q9BVY3</accession>
<accession>Q9H887</accession>
<reference key="1">
    <citation type="journal article" date="2004" name="Nat. Genet.">
        <title>Complete sequencing and characterization of 21,243 full-length human cDNAs.</title>
        <authorList>
            <person name="Ota T."/>
            <person name="Suzuki Y."/>
            <person name="Nishikawa T."/>
            <person name="Otsuki T."/>
            <person name="Sugiyama T."/>
            <person name="Irie R."/>
            <person name="Wakamatsu A."/>
            <person name="Hayashi K."/>
            <person name="Sato H."/>
            <person name="Nagai K."/>
            <person name="Kimura K."/>
            <person name="Makita H."/>
            <person name="Sekine M."/>
            <person name="Obayashi M."/>
            <person name="Nishi T."/>
            <person name="Shibahara T."/>
            <person name="Tanaka T."/>
            <person name="Ishii S."/>
            <person name="Yamamoto J."/>
            <person name="Saito K."/>
            <person name="Kawai Y."/>
            <person name="Isono Y."/>
            <person name="Nakamura Y."/>
            <person name="Nagahari K."/>
            <person name="Murakami K."/>
            <person name="Yasuda T."/>
            <person name="Iwayanagi T."/>
            <person name="Wagatsuma M."/>
            <person name="Shiratori A."/>
            <person name="Sudo H."/>
            <person name="Hosoiri T."/>
            <person name="Kaku Y."/>
            <person name="Kodaira H."/>
            <person name="Kondo H."/>
            <person name="Sugawara M."/>
            <person name="Takahashi M."/>
            <person name="Kanda K."/>
            <person name="Yokoi T."/>
            <person name="Furuya T."/>
            <person name="Kikkawa E."/>
            <person name="Omura Y."/>
            <person name="Abe K."/>
            <person name="Kamihara K."/>
            <person name="Katsuta N."/>
            <person name="Sato K."/>
            <person name="Tanikawa M."/>
            <person name="Yamazaki M."/>
            <person name="Ninomiya K."/>
            <person name="Ishibashi T."/>
            <person name="Yamashita H."/>
            <person name="Murakawa K."/>
            <person name="Fujimori K."/>
            <person name="Tanai H."/>
            <person name="Kimata M."/>
            <person name="Watanabe M."/>
            <person name="Hiraoka S."/>
            <person name="Chiba Y."/>
            <person name="Ishida S."/>
            <person name="Ono Y."/>
            <person name="Takiguchi S."/>
            <person name="Watanabe S."/>
            <person name="Yosida M."/>
            <person name="Hotuta T."/>
            <person name="Kusano J."/>
            <person name="Kanehori K."/>
            <person name="Takahashi-Fujii A."/>
            <person name="Hara H."/>
            <person name="Tanase T.-O."/>
            <person name="Nomura Y."/>
            <person name="Togiya S."/>
            <person name="Komai F."/>
            <person name="Hara R."/>
            <person name="Takeuchi K."/>
            <person name="Arita M."/>
            <person name="Imose N."/>
            <person name="Musashino K."/>
            <person name="Yuuki H."/>
            <person name="Oshima A."/>
            <person name="Sasaki N."/>
            <person name="Aotsuka S."/>
            <person name="Yoshikawa Y."/>
            <person name="Matsunawa H."/>
            <person name="Ichihara T."/>
            <person name="Shiohata N."/>
            <person name="Sano S."/>
            <person name="Moriya S."/>
            <person name="Momiyama H."/>
            <person name="Satoh N."/>
            <person name="Takami S."/>
            <person name="Terashima Y."/>
            <person name="Suzuki O."/>
            <person name="Nakagawa S."/>
            <person name="Senoh A."/>
            <person name="Mizoguchi H."/>
            <person name="Goto Y."/>
            <person name="Shimizu F."/>
            <person name="Wakebe H."/>
            <person name="Hishigaki H."/>
            <person name="Watanabe T."/>
            <person name="Sugiyama A."/>
            <person name="Takemoto M."/>
            <person name="Kawakami B."/>
            <person name="Yamazaki M."/>
            <person name="Watanabe K."/>
            <person name="Kumagai A."/>
            <person name="Itakura S."/>
            <person name="Fukuzumi Y."/>
            <person name="Fujimori Y."/>
            <person name="Komiyama M."/>
            <person name="Tashiro H."/>
            <person name="Tanigami A."/>
            <person name="Fujiwara T."/>
            <person name="Ono T."/>
            <person name="Yamada K."/>
            <person name="Fujii Y."/>
            <person name="Ozaki K."/>
            <person name="Hirao M."/>
            <person name="Ohmori Y."/>
            <person name="Kawabata A."/>
            <person name="Hikiji T."/>
            <person name="Kobatake N."/>
            <person name="Inagaki H."/>
            <person name="Ikema Y."/>
            <person name="Okamoto S."/>
            <person name="Okitani R."/>
            <person name="Kawakami T."/>
            <person name="Noguchi S."/>
            <person name="Itoh T."/>
            <person name="Shigeta K."/>
            <person name="Senba T."/>
            <person name="Matsumura K."/>
            <person name="Nakajima Y."/>
            <person name="Mizuno T."/>
            <person name="Morinaga M."/>
            <person name="Sasaki M."/>
            <person name="Togashi T."/>
            <person name="Oyama M."/>
            <person name="Hata H."/>
            <person name="Watanabe M."/>
            <person name="Komatsu T."/>
            <person name="Mizushima-Sugano J."/>
            <person name="Satoh T."/>
            <person name="Shirai Y."/>
            <person name="Takahashi Y."/>
            <person name="Nakagawa K."/>
            <person name="Okumura K."/>
            <person name="Nagase T."/>
            <person name="Nomura N."/>
            <person name="Kikuchi H."/>
            <person name="Masuho Y."/>
            <person name="Yamashita R."/>
            <person name="Nakai K."/>
            <person name="Yada T."/>
            <person name="Nakamura Y."/>
            <person name="Ohara O."/>
            <person name="Isogai T."/>
            <person name="Sugano S."/>
        </authorList>
    </citation>
    <scope>NUCLEOTIDE SEQUENCE [LARGE SCALE MRNA] (ISOFORMS 1 AND 2)</scope>
    <source>
        <tissue>Prostate</tissue>
        <tissue>Thyroid</tissue>
    </source>
</reference>
<reference key="2">
    <citation type="submission" date="2005-04" db="EMBL/GenBank/DDBJ databases">
        <authorList>
            <person name="Suzuki Y."/>
            <person name="Sugano S."/>
            <person name="Totoki Y."/>
            <person name="Toyoda A."/>
            <person name="Takeda T."/>
            <person name="Sakaki Y."/>
            <person name="Tanaka A."/>
            <person name="Yokoyama S."/>
        </authorList>
    </citation>
    <scope>NUCLEOTIDE SEQUENCE [LARGE SCALE MRNA] (ISOFORM 1)</scope>
    <source>
        <tissue>Kidney</tissue>
    </source>
</reference>
<reference key="3">
    <citation type="journal article" date="2004" name="Genome Res.">
        <title>The status, quality, and expansion of the NIH full-length cDNA project: the Mammalian Gene Collection (MGC).</title>
        <authorList>
            <consortium name="The MGC Project Team"/>
        </authorList>
    </citation>
    <scope>NUCLEOTIDE SEQUENCE [LARGE SCALE MRNA] (ISOFORM 1)</scope>
    <scope>VARIANT CYS-185</scope>
    <source>
        <tissue>Placenta</tissue>
        <tissue>Uterus</tissue>
    </source>
</reference>
<reference key="4">
    <citation type="journal article" date="2012" name="Proc. Natl. Acad. Sci. U.S.A.">
        <title>N-terminal acetylome analyses and functional insights of the N-terminal acetyltransferase NatB.</title>
        <authorList>
            <person name="Van Damme P."/>
            <person name="Lasa M."/>
            <person name="Polevoda B."/>
            <person name="Gazquez C."/>
            <person name="Elosegui-Artola A."/>
            <person name="Kim D.S."/>
            <person name="De Juan-Pardo E."/>
            <person name="Demeyer K."/>
            <person name="Hole K."/>
            <person name="Larrea E."/>
            <person name="Timmerman E."/>
            <person name="Prieto J."/>
            <person name="Arnesen T."/>
            <person name="Sherman F."/>
            <person name="Gevaert K."/>
            <person name="Aldabe R."/>
        </authorList>
    </citation>
    <scope>ACETYLATION [LARGE SCALE ANALYSIS] AT ALA-2</scope>
    <scope>CLEAVAGE OF INITIATOR METHIONINE [LARGE SCALE ANALYSIS]</scope>
    <scope>IDENTIFICATION BY MASS SPECTROMETRY [LARGE SCALE ANALYSIS]</scope>
</reference>
<reference key="5">
    <citation type="journal article" date="2013" name="J. Proteome Res.">
        <title>Toward a comprehensive characterization of a human cancer cell phosphoproteome.</title>
        <authorList>
            <person name="Zhou H."/>
            <person name="Di Palma S."/>
            <person name="Preisinger C."/>
            <person name="Peng M."/>
            <person name="Polat A.N."/>
            <person name="Heck A.J."/>
            <person name="Mohammed S."/>
        </authorList>
    </citation>
    <scope>PHOSPHORYLATION [LARGE SCALE ANALYSIS] AT THR-49</scope>
    <scope>IDENTIFICATION BY MASS SPECTROMETRY [LARGE SCALE ANALYSIS]</scope>
    <source>
        <tissue>Erythroleukemia</tissue>
    </source>
</reference>
<reference key="6">
    <citation type="journal article" date="2015" name="Proteomics">
        <title>N-terminome analysis of the human mitochondrial proteome.</title>
        <authorList>
            <person name="Vaca Jacome A.S."/>
            <person name="Rabilloud T."/>
            <person name="Schaeffer-Reiss C."/>
            <person name="Rompais M."/>
            <person name="Ayoub D."/>
            <person name="Lane L."/>
            <person name="Bairoch A."/>
            <person name="Van Dorsselaer A."/>
            <person name="Carapito C."/>
        </authorList>
    </citation>
    <scope>IDENTIFICATION BY MASS SPECTROMETRY [LARGE SCALE ANALYSIS]</scope>
</reference>
<reference key="7">
    <citation type="journal article" date="2006" name="Science">
        <title>The consensus coding sequences of human breast and colorectal cancers.</title>
        <authorList>
            <person name="Sjoeblom T."/>
            <person name="Jones S."/>
            <person name="Wood L.D."/>
            <person name="Parsons D.W."/>
            <person name="Lin J."/>
            <person name="Barber T.D."/>
            <person name="Mandelker D."/>
            <person name="Leary R.J."/>
            <person name="Ptak J."/>
            <person name="Silliman N."/>
            <person name="Szabo S."/>
            <person name="Buckhaults P."/>
            <person name="Farrell C."/>
            <person name="Meeh P."/>
            <person name="Markowitz S.D."/>
            <person name="Willis J."/>
            <person name="Dawson D."/>
            <person name="Willson J.K.V."/>
            <person name="Gazdar A.F."/>
            <person name="Hartigan J."/>
            <person name="Wu L."/>
            <person name="Liu C."/>
            <person name="Parmigiani G."/>
            <person name="Park B.H."/>
            <person name="Bachman K.E."/>
            <person name="Papadopoulos N."/>
            <person name="Vogelstein B."/>
            <person name="Kinzler K.W."/>
            <person name="Velculescu V.E."/>
        </authorList>
    </citation>
    <scope>VARIANT [LARGE SCALE ANALYSIS] GLU-43</scope>
</reference>
<protein>
    <recommendedName>
        <fullName evidence="5">RUS family member 1</fullName>
    </recommendedName>
</protein>
<dbReference type="EMBL" id="AK023930">
    <property type="protein sequence ID" value="BAB14730.1"/>
    <property type="molecule type" value="mRNA"/>
</dbReference>
<dbReference type="EMBL" id="AK092580">
    <property type="protein sequence ID" value="BAC03918.1"/>
    <property type="molecule type" value="mRNA"/>
</dbReference>
<dbReference type="EMBL" id="AK222913">
    <property type="protein sequence ID" value="BAD96633.1"/>
    <property type="molecule type" value="mRNA"/>
</dbReference>
<dbReference type="EMBL" id="BC000822">
    <property type="protein sequence ID" value="AAH00822.1"/>
    <property type="molecule type" value="mRNA"/>
</dbReference>
<dbReference type="EMBL" id="BC009308">
    <property type="protein sequence ID" value="AAH09308.1"/>
    <property type="molecule type" value="mRNA"/>
</dbReference>
<dbReference type="CCDS" id="CCDS10715.1">
    <molecule id="Q96GQ5-1"/>
</dbReference>
<dbReference type="RefSeq" id="NP_073581.2">
    <molecule id="Q96GQ5-1"/>
    <property type="nucleotide sequence ID" value="NM_022744.4"/>
</dbReference>
<dbReference type="BioGRID" id="122269">
    <property type="interactions" value="239"/>
</dbReference>
<dbReference type="FunCoup" id="Q96GQ5">
    <property type="interactions" value="286"/>
</dbReference>
<dbReference type="IntAct" id="Q96GQ5">
    <property type="interactions" value="168"/>
</dbReference>
<dbReference type="MINT" id="Q96GQ5"/>
<dbReference type="STRING" id="9606.ENSP00000317579"/>
<dbReference type="iPTMnet" id="Q96GQ5"/>
<dbReference type="PhosphoSitePlus" id="Q96GQ5"/>
<dbReference type="SwissPalm" id="Q96GQ5"/>
<dbReference type="BioMuta" id="C16orf58"/>
<dbReference type="DMDM" id="143955305"/>
<dbReference type="jPOST" id="Q96GQ5"/>
<dbReference type="MassIVE" id="Q96GQ5"/>
<dbReference type="PaxDb" id="9606-ENSP00000317579"/>
<dbReference type="PeptideAtlas" id="Q96GQ5"/>
<dbReference type="ProteomicsDB" id="76653">
    <molecule id="Q96GQ5-1"/>
</dbReference>
<dbReference type="ProteomicsDB" id="76654">
    <molecule id="Q96GQ5-2"/>
</dbReference>
<dbReference type="Pumba" id="Q96GQ5"/>
<dbReference type="Antibodypedia" id="14220">
    <property type="antibodies" value="32 antibodies from 15 providers"/>
</dbReference>
<dbReference type="DNASU" id="64755"/>
<dbReference type="Ensembl" id="ENST00000327237.7">
    <molecule id="Q96GQ5-1"/>
    <property type="protein sequence ID" value="ENSP00000317579.2"/>
    <property type="gene ID" value="ENSG00000140688.18"/>
</dbReference>
<dbReference type="GeneID" id="64755"/>
<dbReference type="KEGG" id="hsa:64755"/>
<dbReference type="MANE-Select" id="ENST00000327237.7">
    <property type="protein sequence ID" value="ENSP00000317579.2"/>
    <property type="RefSeq nucleotide sequence ID" value="NM_022744.4"/>
    <property type="RefSeq protein sequence ID" value="NP_073581.2"/>
</dbReference>
<dbReference type="UCSC" id="uc002eci.4">
    <molecule id="Q96GQ5-1"/>
    <property type="organism name" value="human"/>
</dbReference>
<dbReference type="AGR" id="HGNC:25848"/>
<dbReference type="CTD" id="64755"/>
<dbReference type="DisGeNET" id="64755"/>
<dbReference type="GeneCards" id="RUSF1"/>
<dbReference type="HGNC" id="HGNC:25848">
    <property type="gene designation" value="RUSF1"/>
</dbReference>
<dbReference type="HPA" id="ENSG00000140688">
    <property type="expression patterns" value="Low tissue specificity"/>
</dbReference>
<dbReference type="MalaCards" id="RUSF1"/>
<dbReference type="neXtProt" id="NX_Q96GQ5"/>
<dbReference type="OpenTargets" id="ENSG00000140688"/>
<dbReference type="VEuPathDB" id="HostDB:ENSG00000140688"/>
<dbReference type="eggNOG" id="KOG4249">
    <property type="taxonomic scope" value="Eukaryota"/>
</dbReference>
<dbReference type="GeneTree" id="ENSGT00390000000050"/>
<dbReference type="InParanoid" id="Q96GQ5"/>
<dbReference type="OMA" id="VAVQWII"/>
<dbReference type="OrthoDB" id="364779at2759"/>
<dbReference type="PAN-GO" id="Q96GQ5">
    <property type="GO annotations" value="0 GO annotations based on evolutionary models"/>
</dbReference>
<dbReference type="PhylomeDB" id="Q96GQ5"/>
<dbReference type="TreeFam" id="TF326424"/>
<dbReference type="PathwayCommons" id="Q96GQ5"/>
<dbReference type="SignaLink" id="Q96GQ5"/>
<dbReference type="BioGRID-ORCS" id="64755">
    <property type="hits" value="12 hits in 1143 CRISPR screens"/>
</dbReference>
<dbReference type="ChiTaRS" id="C16orf58">
    <property type="organism name" value="human"/>
</dbReference>
<dbReference type="GeneWiki" id="C16orf58"/>
<dbReference type="GenomeRNAi" id="64755"/>
<dbReference type="Pharos" id="Q96GQ5">
    <property type="development level" value="Tdark"/>
</dbReference>
<dbReference type="PRO" id="PR:Q96GQ5"/>
<dbReference type="Proteomes" id="UP000005640">
    <property type="component" value="Chromosome 16"/>
</dbReference>
<dbReference type="RNAct" id="Q96GQ5">
    <property type="molecule type" value="protein"/>
</dbReference>
<dbReference type="Bgee" id="ENSG00000140688">
    <property type="expression patterns" value="Expressed in adenohypophysis and 182 other cell types or tissues"/>
</dbReference>
<dbReference type="ExpressionAtlas" id="Q96GQ5">
    <property type="expression patterns" value="baseline and differential"/>
</dbReference>
<dbReference type="GO" id="GO:0016020">
    <property type="term" value="C:membrane"/>
    <property type="evidence" value="ECO:0007005"/>
    <property type="project" value="UniProtKB"/>
</dbReference>
<dbReference type="InterPro" id="IPR006968">
    <property type="entry name" value="RUS_fam"/>
</dbReference>
<dbReference type="InterPro" id="IPR055412">
    <property type="entry name" value="UVB_sens_C"/>
</dbReference>
<dbReference type="InterPro" id="IPR054549">
    <property type="entry name" value="UVB_sens_RUS_dom"/>
</dbReference>
<dbReference type="PANTHER" id="PTHR12770:SF31">
    <property type="entry name" value="RUS FAMILY MEMBER 1"/>
    <property type="match status" value="1"/>
</dbReference>
<dbReference type="PANTHER" id="PTHR12770">
    <property type="entry name" value="RUS1 FAMILY PROTEIN C16ORF58"/>
    <property type="match status" value="1"/>
</dbReference>
<dbReference type="Pfam" id="PF24160">
    <property type="entry name" value="UVB_sens_C"/>
    <property type="match status" value="1"/>
</dbReference>
<dbReference type="Pfam" id="PF04884">
    <property type="entry name" value="UVB_sens_prot"/>
    <property type="match status" value="1"/>
</dbReference>
<evidence type="ECO:0000255" key="1"/>
<evidence type="ECO:0000269" key="2">
    <source>
    </source>
</evidence>
<evidence type="ECO:0000269" key="3">
    <source>
    </source>
</evidence>
<evidence type="ECO:0000303" key="4">
    <source>
    </source>
</evidence>
<evidence type="ECO:0000305" key="5"/>
<evidence type="ECO:0000312" key="6">
    <source>
        <dbReference type="HGNC" id="HGNC:25848"/>
    </source>
</evidence>
<evidence type="ECO:0007744" key="7">
    <source>
    </source>
</evidence>
<evidence type="ECO:0007744" key="8">
    <source>
    </source>
</evidence>
<feature type="initiator methionine" description="Removed" evidence="7">
    <location>
        <position position="1"/>
    </location>
</feature>
<feature type="chain" id="PRO_0000282930" description="RUS family member 1">
    <location>
        <begin position="2"/>
        <end position="468"/>
    </location>
</feature>
<feature type="transmembrane region" description="Helical" evidence="1">
    <location>
        <begin position="247"/>
        <end position="267"/>
    </location>
</feature>
<feature type="modified residue" description="N-acetylalanine" evidence="7">
    <location>
        <position position="2"/>
    </location>
</feature>
<feature type="modified residue" description="Phosphothreonine" evidence="8">
    <location>
        <position position="49"/>
    </location>
</feature>
<feature type="splice variant" id="VSP_024255" description="In isoform 2." evidence="4">
    <location>
        <begin position="1"/>
        <end position="262"/>
    </location>
</feature>
<feature type="splice variant" id="VSP_024256" description="In isoform 2." evidence="4">
    <original>CFFFLTALHIYANYRAVRALVMETLNEGRLRLVLKHYLQRGEVLDPTAANRMEPLWTGFWPAPSLSLGVPLHRLVS</original>
    <variation>MCLMGEGRMGRWGSWMTGYRKKGWIWCVWVMAEGERKRGDLSEAWIISVHWVAVQWLVGHACLCCPPPPLHCPLPH</variation>
    <location>
        <begin position="263"/>
        <end position="338"/>
    </location>
</feature>
<feature type="sequence variant" id="VAR_036485" description="In a breast cancer sample; somatic mutation." evidence="3">
    <original>G</original>
    <variation>E</variation>
    <location>
        <position position="43"/>
    </location>
</feature>
<feature type="sequence variant" id="VAR_031439" description="In dbSNP:rs17855405." evidence="2">
    <original>Y</original>
    <variation>C</variation>
    <location>
        <position position="185"/>
    </location>
</feature>
<feature type="sequence conflict" description="In Ref. 1; BAC03918." evidence="5" ref="1">
    <original>Q</original>
    <variation>R</variation>
    <location>
        <position position="449"/>
    </location>
</feature>
<feature type="sequence conflict" description="In Ref. 1; BAB14730." evidence="5" ref="1">
    <original>D</original>
    <variation>G</variation>
    <location>
        <position position="453"/>
    </location>
</feature>
<proteinExistence type="evidence at protein level"/>
<organism>
    <name type="scientific">Homo sapiens</name>
    <name type="common">Human</name>
    <dbReference type="NCBI Taxonomy" id="9606"/>
    <lineage>
        <taxon>Eukaryota</taxon>
        <taxon>Metazoa</taxon>
        <taxon>Chordata</taxon>
        <taxon>Craniata</taxon>
        <taxon>Vertebrata</taxon>
        <taxon>Euteleostomi</taxon>
        <taxon>Mammalia</taxon>
        <taxon>Eutheria</taxon>
        <taxon>Euarchontoglires</taxon>
        <taxon>Primates</taxon>
        <taxon>Haplorrhini</taxon>
        <taxon>Catarrhini</taxon>
        <taxon>Hominidae</taxon>
        <taxon>Homo</taxon>
    </lineage>
</organism>
<comment type="interaction">
    <interactant intactId="EBI-8636004">
        <id>Q96GQ5</id>
    </interactant>
    <interactant intactId="EBI-13059134">
        <id>Q13520</id>
        <label>AQP6</label>
    </interactant>
    <organismsDiffer>false</organismsDiffer>
    <experiments>3</experiments>
</comment>
<comment type="interaction">
    <interactant intactId="EBI-8636004">
        <id>Q96GQ5</id>
    </interactant>
    <interactant intactId="EBI-2808844">
        <id>Q8N6S5</id>
        <label>ARL6IP6</label>
    </interactant>
    <organismsDiffer>false</organismsDiffer>
    <experiments>3</experiments>
</comment>
<comment type="interaction">
    <interactant intactId="EBI-8636004">
        <id>Q96GQ5</id>
    </interactant>
    <interactant intactId="EBI-12275524">
        <id>P23560-2</id>
        <label>BDNF</label>
    </interactant>
    <organismsDiffer>false</organismsDiffer>
    <experiments>3</experiments>
</comment>
<comment type="interaction">
    <interactant intactId="EBI-8636004">
        <id>Q96GQ5</id>
    </interactant>
    <interactant intactId="EBI-700794">
        <id>Q13323</id>
        <label>BIK</label>
    </interactant>
    <organismsDiffer>false</organismsDiffer>
    <experiments>3</experiments>
</comment>
<comment type="interaction">
    <interactant intactId="EBI-8636004">
        <id>Q96GQ5</id>
    </interactant>
    <interactant intactId="EBI-11986083">
        <id>Q6UWT4</id>
        <label>C5orf46</label>
    </interactant>
    <organismsDiffer>false</organismsDiffer>
    <experiments>3</experiments>
</comment>
<comment type="interaction">
    <interactant intactId="EBI-8636004">
        <id>Q96GQ5</id>
    </interactant>
    <interactant intactId="EBI-1045797">
        <id>Q8N5K1</id>
        <label>CISD2</label>
    </interactant>
    <organismsDiffer>false</organismsDiffer>
    <experiments>3</experiments>
</comment>
<comment type="interaction">
    <interactant intactId="EBI-8636004">
        <id>Q96GQ5</id>
    </interactant>
    <interactant intactId="EBI-11522780">
        <id>Q96DZ9-2</id>
        <label>CMTM5</label>
    </interactant>
    <organismsDiffer>false</organismsDiffer>
    <experiments>3</experiments>
</comment>
<comment type="interaction">
    <interactant intactId="EBI-8636004">
        <id>Q96GQ5</id>
    </interactant>
    <interactant intactId="EBI-6942903">
        <id>Q96BA8</id>
        <label>CREB3L1</label>
    </interactant>
    <organismsDiffer>false</organismsDiffer>
    <experiments>3</experiments>
</comment>
<comment type="interaction">
    <interactant intactId="EBI-8636004">
        <id>Q96GQ5</id>
    </interactant>
    <interactant intactId="EBI-852194">
        <id>Q68CJ9</id>
        <label>CREB3L3</label>
    </interactant>
    <organismsDiffer>false</organismsDiffer>
    <experiments>3</experiments>
</comment>
<comment type="interaction">
    <interactant intactId="EBI-8636004">
        <id>Q96GQ5</id>
    </interactant>
    <interactant intactId="EBI-12831978">
        <id>Q6ZPD8</id>
        <label>DGAT2L6</label>
    </interactant>
    <organismsDiffer>false</organismsDiffer>
    <experiments>3</experiments>
</comment>
<comment type="interaction">
    <interactant intactId="EBI-8636004">
        <id>Q96GQ5</id>
    </interactant>
    <interactant intactId="EBI-3923585">
        <id>Q8N5I4</id>
        <label>DHRSX</label>
    </interactant>
    <organismsDiffer>false</organismsDiffer>
    <experiments>3</experiments>
</comment>
<comment type="interaction">
    <interactant intactId="EBI-8636004">
        <id>Q96GQ5</id>
    </interactant>
    <interactant intactId="EBI-3915253">
        <id>Q15125</id>
        <label>EBP</label>
    </interactant>
    <organismsDiffer>false</organismsDiffer>
    <experiments>3</experiments>
</comment>
<comment type="interaction">
    <interactant intactId="EBI-8636004">
        <id>Q96GQ5</id>
    </interactant>
    <interactant intactId="EBI-2339219">
        <id>Q08426</id>
        <label>EHHADH</label>
    </interactant>
    <organismsDiffer>false</organismsDiffer>
    <experiments>3</experiments>
</comment>
<comment type="interaction">
    <interactant intactId="EBI-8636004">
        <id>Q96GQ5</id>
    </interactant>
    <interactant intactId="EBI-781551">
        <id>Q9Y282</id>
        <label>ERGIC3</label>
    </interactant>
    <organismsDiffer>false</organismsDiffer>
    <experiments>3</experiments>
</comment>
<comment type="interaction">
    <interactant intactId="EBI-8636004">
        <id>Q96GQ5</id>
    </interactant>
    <interactant intactId="EBI-18304435">
        <id>Q5JX71</id>
        <label>FAM209A</label>
    </interactant>
    <organismsDiffer>false</organismsDiffer>
    <experiments>3</experiments>
</comment>
<comment type="interaction">
    <interactant intactId="EBI-8636004">
        <id>Q96GQ5</id>
    </interactant>
    <interactant intactId="EBI-2833872">
        <id>O15552</id>
        <label>FFAR2</label>
    </interactant>
    <organismsDiffer>false</organismsDiffer>
    <experiments>3</experiments>
</comment>
<comment type="interaction">
    <interactant intactId="EBI-8636004">
        <id>Q96GQ5</id>
    </interactant>
    <interactant intactId="EBI-3918971">
        <id>Q9Y680</id>
        <label>FKBP7</label>
    </interactant>
    <organismsDiffer>false</organismsDiffer>
    <experiments>3</experiments>
</comment>
<comment type="interaction">
    <interactant intactId="EBI-8636004">
        <id>Q96GQ5</id>
    </interactant>
    <interactant intactId="EBI-17458373">
        <id>P48165</id>
        <label>GJA8</label>
    </interactant>
    <organismsDiffer>false</organismsDiffer>
    <experiments>3</experiments>
</comment>
<comment type="interaction">
    <interactant intactId="EBI-8636004">
        <id>Q96GQ5</id>
    </interactant>
    <interactant intactId="EBI-18076404">
        <id>O15529</id>
        <label>GPR42</label>
    </interactant>
    <organismsDiffer>false</organismsDiffer>
    <experiments>3</experiments>
</comment>
<comment type="interaction">
    <interactant intactId="EBI-8636004">
        <id>Q96GQ5</id>
    </interactant>
    <interactant intactId="EBI-18053395">
        <id>Q7Z5P4</id>
        <label>HSD17B13</label>
    </interactant>
    <organismsDiffer>false</organismsDiffer>
    <experiments>3</experiments>
</comment>
<comment type="interaction">
    <interactant intactId="EBI-8636004">
        <id>Q96GQ5</id>
    </interactant>
    <interactant intactId="EBI-3918847">
        <id>Q9H2F3</id>
        <label>HSD3B7</label>
    </interactant>
    <organismsDiffer>false</organismsDiffer>
    <experiments>3</experiments>
</comment>
<comment type="interaction">
    <interactant intactId="EBI-8636004">
        <id>Q96GQ5</id>
    </interactant>
    <interactant intactId="EBI-517086">
        <id>O43464</id>
        <label>HTRA2</label>
    </interactant>
    <organismsDiffer>false</organismsDiffer>
    <experiments>3</experiments>
</comment>
<comment type="interaction">
    <interactant intactId="EBI-8636004">
        <id>Q96GQ5</id>
    </interactant>
    <interactant intactId="EBI-466029">
        <id>P42858</id>
        <label>HTT</label>
    </interactant>
    <organismsDiffer>false</organismsDiffer>
    <experiments>3</experiments>
</comment>
<comment type="interaction">
    <interactant intactId="EBI-8636004">
        <id>Q96GQ5</id>
    </interactant>
    <interactant intactId="EBI-1030755">
        <id>P15260</id>
        <label>IFNGR1</label>
    </interactant>
    <organismsDiffer>false</organismsDiffer>
    <experiments>4</experiments>
</comment>
<comment type="interaction">
    <interactant intactId="EBI-8636004">
        <id>Q96GQ5</id>
    </interactant>
    <interactant intactId="EBI-1031656">
        <id>Q13651</id>
        <label>IL10RA</label>
    </interactant>
    <organismsDiffer>false</organismsDiffer>
    <experiments>3</experiments>
</comment>
<comment type="interaction">
    <interactant intactId="EBI-8636004">
        <id>Q96GQ5</id>
    </interactant>
    <interactant intactId="EBI-2568251">
        <id>P11215</id>
        <label>ITGAM</label>
    </interactant>
    <organismsDiffer>false</organismsDiffer>
    <experiments>3</experiments>
</comment>
<comment type="interaction">
    <interactant intactId="EBI-8636004">
        <id>Q96GQ5</id>
    </interactant>
    <interactant intactId="EBI-2820517">
        <id>Q8TAF8</id>
        <label>LHFPL5</label>
    </interactant>
    <organismsDiffer>false</organismsDiffer>
    <experiments>3</experiments>
</comment>
<comment type="interaction">
    <interactant intactId="EBI-8636004">
        <id>Q96GQ5</id>
    </interactant>
    <interactant intactId="EBI-6163737">
        <id>Q8N4V1</id>
        <label>MMGT1</label>
    </interactant>
    <organismsDiffer>false</organismsDiffer>
    <experiments>3</experiments>
</comment>
<comment type="interaction">
    <interactant intactId="EBI-8636004">
        <id>Q96GQ5</id>
    </interactant>
    <interactant intactId="EBI-12820341">
        <id>Q96JQ5</id>
        <label>MS4A4A</label>
    </interactant>
    <organismsDiffer>false</organismsDiffer>
    <experiments>3</experiments>
</comment>
<comment type="interaction">
    <interactant intactId="EBI-8636004">
        <id>Q96GQ5</id>
    </interactant>
    <interactant intactId="EBI-12382569">
        <id>Q2M2E3</id>
        <label>ODF4</label>
    </interactant>
    <organismsDiffer>false</organismsDiffer>
    <experiments>3</experiments>
</comment>
<comment type="interaction">
    <interactant intactId="EBI-8636004">
        <id>Q96GQ5</id>
    </interactant>
    <interactant intactId="EBI-16427978">
        <id>Q9BQ51</id>
        <label>PDCD1LG2</label>
    </interactant>
    <organismsDiffer>false</organismsDiffer>
    <experiments>3</experiments>
</comment>
<comment type="interaction">
    <interactant intactId="EBI-8636004">
        <id>Q96GQ5</id>
    </interactant>
    <interactant intactId="EBI-1050125">
        <id>O15173</id>
        <label>PGRMC2</label>
    </interactant>
    <organismsDiffer>false</organismsDiffer>
    <experiments>3</experiments>
</comment>
<comment type="interaction">
    <interactant intactId="EBI-8636004">
        <id>Q96GQ5</id>
    </interactant>
    <interactant intactId="EBI-752074">
        <id>P41219</id>
        <label>PRPH</label>
    </interactant>
    <organismsDiffer>false</organismsDiffer>
    <experiments>3</experiments>
</comment>
<comment type="interaction">
    <interactant intactId="EBI-8636004">
        <id>Q96GQ5</id>
    </interactant>
    <interactant intactId="EBI-3919694">
        <id>P15151</id>
        <label>PVR</label>
    </interactant>
    <organismsDiffer>false</organismsDiffer>
    <experiments>3</experiments>
</comment>
<comment type="interaction">
    <interactant intactId="EBI-8636004">
        <id>Q96GQ5</id>
    </interactant>
    <interactant intactId="EBI-10192441">
        <id>Q86VR2</id>
        <label>RETREG3</label>
    </interactant>
    <organismsDiffer>false</organismsDiffer>
    <experiments>3</experiments>
</comment>
<comment type="interaction">
    <interactant intactId="EBI-8636004">
        <id>Q96GQ5</id>
    </interactant>
    <interactant intactId="EBI-348482">
        <id>Q99942</id>
        <label>RNF5</label>
    </interactant>
    <organismsDiffer>false</organismsDiffer>
    <experiments>3</experiments>
</comment>
<comment type="interaction">
    <interactant intactId="EBI-8636004">
        <id>Q96GQ5</id>
    </interactant>
    <interactant intactId="EBI-17247926">
        <id>Q9NY72</id>
        <label>SCN3B</label>
    </interactant>
    <organismsDiffer>false</organismsDiffer>
    <experiments>3</experiments>
</comment>
<comment type="interaction">
    <interactant intactId="EBI-8636004">
        <id>Q96GQ5</id>
    </interactant>
    <interactant intactId="EBI-1171999">
        <id>Q9BWM7</id>
        <label>SFXN3</label>
    </interactant>
    <organismsDiffer>false</organismsDiffer>
    <experiments>3</experiments>
</comment>
<comment type="interaction">
    <interactant intactId="EBI-8636004">
        <id>Q96GQ5</id>
    </interactant>
    <interactant intactId="EBI-3923031">
        <id>Q14973</id>
        <label>SLC10A1</label>
    </interactant>
    <organismsDiffer>false</organismsDiffer>
    <experiments>3</experiments>
</comment>
<comment type="interaction">
    <interactant intactId="EBI-8636004">
        <id>Q96GQ5</id>
    </interactant>
    <interactant intactId="EBI-18159983">
        <id>Q3KNW5</id>
        <label>SLC10A6</label>
    </interactant>
    <organismsDiffer>false</organismsDiffer>
    <experiments>3</experiments>
</comment>
<comment type="interaction">
    <interactant intactId="EBI-8636004">
        <id>Q96GQ5</id>
    </interactant>
    <interactant intactId="EBI-10262251">
        <id>Q8IWU4</id>
        <label>SLC30A8</label>
    </interactant>
    <organismsDiffer>false</organismsDiffer>
    <experiments>3</experiments>
</comment>
<comment type="interaction">
    <interactant intactId="EBI-8636004">
        <id>Q96GQ5</id>
    </interactant>
    <interactant intactId="EBI-17295964">
        <id>Q9NQQ7-3</id>
        <label>SLC35C2</label>
    </interactant>
    <organismsDiffer>false</organismsDiffer>
    <experiments>3</experiments>
</comment>
<comment type="interaction">
    <interactant intactId="EBI-8636004">
        <id>Q96GQ5</id>
    </interactant>
    <interactant intactId="EBI-13389236">
        <id>Q7Z769</id>
        <label>SLC35E3</label>
    </interactant>
    <organismsDiffer>false</organismsDiffer>
    <experiments>3</experiments>
</comment>
<comment type="interaction">
    <interactant intactId="EBI-8636004">
        <id>Q96GQ5</id>
    </interactant>
    <interactant intactId="EBI-10819434">
        <id>Q9NPE6</id>
        <label>SPAG4</label>
    </interactant>
    <organismsDiffer>false</organismsDiffer>
    <experiments>3</experiments>
</comment>
<comment type="interaction">
    <interactant intactId="EBI-8636004">
        <id>Q96GQ5</id>
    </interactant>
    <interactant intactId="EBI-17280858">
        <id>Q8WWF3</id>
        <label>SSMEM1</label>
    </interactant>
    <organismsDiffer>false</organismsDiffer>
    <experiments>3</experiments>
</comment>
<comment type="interaction">
    <interactant intactId="EBI-8636004">
        <id>Q96GQ5</id>
    </interactant>
    <interactant intactId="EBI-19027521">
        <id>Q8N6K0</id>
        <label>TEX29</label>
    </interactant>
    <organismsDiffer>false</organismsDiffer>
    <experiments>3</experiments>
</comment>
<comment type="interaction">
    <interactant intactId="EBI-8636004">
        <id>Q96GQ5</id>
    </interactant>
    <interactant intactId="EBI-10982110">
        <id>Q96Q45-2</id>
        <label>TMEM237</label>
    </interactant>
    <organismsDiffer>false</organismsDiffer>
    <experiments>3</experiments>
</comment>
<comment type="interaction">
    <interactant intactId="EBI-8636004">
        <id>Q96GQ5</id>
    </interactant>
    <interactant intactId="EBI-10314986">
        <id>Q9NWD8</id>
        <label>TMEM248</label>
    </interactant>
    <organismsDiffer>false</organismsDiffer>
    <experiments>3</experiments>
</comment>
<comment type="interaction">
    <interactant intactId="EBI-8636004">
        <id>Q96GQ5</id>
    </interactant>
    <interactant intactId="EBI-11722971">
        <id>Q53FP2</id>
        <label>TMEM35A</label>
    </interactant>
    <organismsDiffer>false</organismsDiffer>
    <experiments>3</experiments>
</comment>
<comment type="interaction">
    <interactant intactId="EBI-8636004">
        <id>Q96GQ5</id>
    </interactant>
    <interactant intactId="EBI-6447886">
        <id>Q9Y320</id>
        <label>TMX2</label>
    </interactant>
    <organismsDiffer>false</organismsDiffer>
    <experiments>3</experiments>
</comment>
<comment type="interaction">
    <interactant intactId="EBI-8636004">
        <id>Q96GQ5</id>
    </interactant>
    <interactant intactId="EBI-10180829">
        <id>Q7KZS0</id>
        <label>UBE2I</label>
    </interactant>
    <organismsDiffer>false</organismsDiffer>
    <experiments>3</experiments>
</comment>
<comment type="interaction">
    <interactant intactId="EBI-8636004">
        <id>Q96GQ5</id>
    </interactant>
    <interactant intactId="EBI-720609">
        <id>O76024</id>
        <label>WFS1</label>
    </interactant>
    <organismsDiffer>false</organismsDiffer>
    <experiments>3</experiments>
</comment>
<comment type="interaction">
    <interactant intactId="EBI-8636004">
        <id>Q96GQ5</id>
    </interactant>
    <interactant intactId="EBI-748373">
        <id>Q6PEW1</id>
        <label>ZCCHC12</label>
    </interactant>
    <organismsDiffer>false</organismsDiffer>
    <experiments>3</experiments>
</comment>
<comment type="interaction">
    <interactant intactId="EBI-8636004">
        <id>Q96GQ5</id>
    </interactant>
    <interactant intactId="EBI-12837904">
        <id>Q96MV8</id>
        <label>ZDHHC15</label>
    </interactant>
    <organismsDiffer>false</organismsDiffer>
    <experiments>3</experiments>
</comment>
<comment type="subcellular location">
    <subcellularLocation>
        <location evidence="5">Membrane</location>
        <topology evidence="5">Single-pass membrane protein</topology>
    </subcellularLocation>
</comment>
<comment type="alternative products">
    <event type="alternative splicing"/>
    <isoform>
        <id>Q96GQ5-1</id>
        <name>1</name>
        <sequence type="displayed"/>
    </isoform>
    <isoform>
        <id>Q96GQ5-2</id>
        <name>2</name>
        <sequence type="described" ref="VSP_024255 VSP_024256"/>
    </isoform>
</comment>
<comment type="similarity">
    <text evidence="5">Belongs to the RUS1 family.</text>
</comment>